<feature type="signal peptide" evidence="2">
    <location>
        <begin position="1"/>
        <end position="21"/>
    </location>
</feature>
<feature type="peptide" id="PRO_0000020582" description="Accessory gland peptide Acp33A">
    <location>
        <begin position="22"/>
        <end position="47"/>
    </location>
</feature>
<feature type="sequence variant" description="In strain: ZIM30C." evidence="2">
    <original>PCCM</original>
    <variation>RVACK</variation>
    <location>
        <begin position="44"/>
        <end position="47"/>
    </location>
</feature>
<sequence>MLPSKRVPFLFTIILFLAGLGQHTTESVLPDCVLYPRCLITKDPCCM</sequence>
<proteinExistence type="evidence at transcript level"/>
<gene>
    <name type="primary">Acp33A</name>
    <name type="ORF">CG6555</name>
</gene>
<evidence type="ECO:0000269" key="1">
    <source>
    </source>
</evidence>
<evidence type="ECO:0000305" key="2"/>
<evidence type="ECO:0000312" key="3">
    <source>
        <dbReference type="EMBL" id="AAG32771.1"/>
    </source>
</evidence>
<organism evidence="3">
    <name type="scientific">Drosophila melanogaster</name>
    <name type="common">Fruit fly</name>
    <dbReference type="NCBI Taxonomy" id="7227"/>
    <lineage>
        <taxon>Eukaryota</taxon>
        <taxon>Metazoa</taxon>
        <taxon>Ecdysozoa</taxon>
        <taxon>Arthropoda</taxon>
        <taxon>Hexapoda</taxon>
        <taxon>Insecta</taxon>
        <taxon>Pterygota</taxon>
        <taxon>Neoptera</taxon>
        <taxon>Endopterygota</taxon>
        <taxon>Diptera</taxon>
        <taxon>Brachycera</taxon>
        <taxon>Muscomorpha</taxon>
        <taxon>Ephydroidea</taxon>
        <taxon>Drosophilidae</taxon>
        <taxon>Drosophila</taxon>
        <taxon>Sophophora</taxon>
    </lineage>
</organism>
<name>A33A_DROME</name>
<protein>
    <recommendedName>
        <fullName>Accessory gland peptide Acp33A</fullName>
    </recommendedName>
</protein>
<keyword id="KW-0085">Behavior</keyword>
<keyword id="KW-1185">Reference proteome</keyword>
<keyword id="KW-0964">Secreted</keyword>
<keyword id="KW-0732">Signal</keyword>
<comment type="function">
    <text evidence="1">Responsible for physiological and behavioral changes in mated female flies.</text>
</comment>
<comment type="subcellular location">
    <subcellularLocation>
        <location evidence="2">Secreted</location>
    </subcellularLocation>
</comment>
<comment type="tissue specificity">
    <text evidence="1">Main cells of accessory gland and seminal fluid.</text>
</comment>
<accession>O46227</accession>
<reference evidence="2" key="1">
    <citation type="journal article" date="1997" name="Insect Biochem. Mol. Biol.">
        <title>New genes for male accessory gland proteins in Drosophila melanogaster.</title>
        <authorList>
            <person name="Wolfner M.F."/>
            <person name="Harada H.A."/>
            <person name="Bertram M.J."/>
            <person name="Stelick T.J."/>
            <person name="Kraus K.W."/>
            <person name="Kalb J.M."/>
            <person name="Lung Y.O."/>
            <person name="Neubaum D.M."/>
            <person name="Park M."/>
            <person name="Tram U.K."/>
        </authorList>
    </citation>
    <scope>NUCLEOTIDE SEQUENCE [MRNA]</scope>
    <scope>FUNCTION</scope>
    <scope>TISSUE SPECIFICITY</scope>
    <source>
        <strain>Canton-S</strain>
        <tissue>Male accessory gland</tissue>
    </source>
</reference>
<reference evidence="2" key="2">
    <citation type="journal article" date="2000" name="Science">
        <title>The genome sequence of Drosophila melanogaster.</title>
        <authorList>
            <person name="Adams M.D."/>
            <person name="Celniker S.E."/>
            <person name="Holt R.A."/>
            <person name="Evans C.A."/>
            <person name="Gocayne J.D."/>
            <person name="Amanatides P.G."/>
            <person name="Scherer S.E."/>
            <person name="Li P.W."/>
            <person name="Hoskins R.A."/>
            <person name="Galle R.F."/>
            <person name="George R.A."/>
            <person name="Lewis S.E."/>
            <person name="Richards S."/>
            <person name="Ashburner M."/>
            <person name="Henderson S.N."/>
            <person name="Sutton G.G."/>
            <person name="Wortman J.R."/>
            <person name="Yandell M.D."/>
            <person name="Zhang Q."/>
            <person name="Chen L.X."/>
            <person name="Brandon R.C."/>
            <person name="Rogers Y.-H.C."/>
            <person name="Blazej R.G."/>
            <person name="Champe M."/>
            <person name="Pfeiffer B.D."/>
            <person name="Wan K.H."/>
            <person name="Doyle C."/>
            <person name="Baxter E.G."/>
            <person name="Helt G."/>
            <person name="Nelson C.R."/>
            <person name="Miklos G.L.G."/>
            <person name="Abril J.F."/>
            <person name="Agbayani A."/>
            <person name="An H.-J."/>
            <person name="Andrews-Pfannkoch C."/>
            <person name="Baldwin D."/>
            <person name="Ballew R.M."/>
            <person name="Basu A."/>
            <person name="Baxendale J."/>
            <person name="Bayraktaroglu L."/>
            <person name="Beasley E.M."/>
            <person name="Beeson K.Y."/>
            <person name="Benos P.V."/>
            <person name="Berman B.P."/>
            <person name="Bhandari D."/>
            <person name="Bolshakov S."/>
            <person name="Borkova D."/>
            <person name="Botchan M.R."/>
            <person name="Bouck J."/>
            <person name="Brokstein P."/>
            <person name="Brottier P."/>
            <person name="Burtis K.C."/>
            <person name="Busam D.A."/>
            <person name="Butler H."/>
            <person name="Cadieu E."/>
            <person name="Center A."/>
            <person name="Chandra I."/>
            <person name="Cherry J.M."/>
            <person name="Cawley S."/>
            <person name="Dahlke C."/>
            <person name="Davenport L.B."/>
            <person name="Davies P."/>
            <person name="de Pablos B."/>
            <person name="Delcher A."/>
            <person name="Deng Z."/>
            <person name="Mays A.D."/>
            <person name="Dew I."/>
            <person name="Dietz S.M."/>
            <person name="Dodson K."/>
            <person name="Doup L.E."/>
            <person name="Downes M."/>
            <person name="Dugan-Rocha S."/>
            <person name="Dunkov B.C."/>
            <person name="Dunn P."/>
            <person name="Durbin K.J."/>
            <person name="Evangelista C.C."/>
            <person name="Ferraz C."/>
            <person name="Ferriera S."/>
            <person name="Fleischmann W."/>
            <person name="Fosler C."/>
            <person name="Gabrielian A.E."/>
            <person name="Garg N.S."/>
            <person name="Gelbart W.M."/>
            <person name="Glasser K."/>
            <person name="Glodek A."/>
            <person name="Gong F."/>
            <person name="Gorrell J.H."/>
            <person name="Gu Z."/>
            <person name="Guan P."/>
            <person name="Harris M."/>
            <person name="Harris N.L."/>
            <person name="Harvey D.A."/>
            <person name="Heiman T.J."/>
            <person name="Hernandez J.R."/>
            <person name="Houck J."/>
            <person name="Hostin D."/>
            <person name="Houston K.A."/>
            <person name="Howland T.J."/>
            <person name="Wei M.-H."/>
            <person name="Ibegwam C."/>
            <person name="Jalali M."/>
            <person name="Kalush F."/>
            <person name="Karpen G.H."/>
            <person name="Ke Z."/>
            <person name="Kennison J.A."/>
            <person name="Ketchum K.A."/>
            <person name="Kimmel B.E."/>
            <person name="Kodira C.D."/>
            <person name="Kraft C.L."/>
            <person name="Kravitz S."/>
            <person name="Kulp D."/>
            <person name="Lai Z."/>
            <person name="Lasko P."/>
            <person name="Lei Y."/>
            <person name="Levitsky A.A."/>
            <person name="Li J.H."/>
            <person name="Li Z."/>
            <person name="Liang Y."/>
            <person name="Lin X."/>
            <person name="Liu X."/>
            <person name="Mattei B."/>
            <person name="McIntosh T.C."/>
            <person name="McLeod M.P."/>
            <person name="McPherson D."/>
            <person name="Merkulov G."/>
            <person name="Milshina N.V."/>
            <person name="Mobarry C."/>
            <person name="Morris J."/>
            <person name="Moshrefi A."/>
            <person name="Mount S.M."/>
            <person name="Moy M."/>
            <person name="Murphy B."/>
            <person name="Murphy L."/>
            <person name="Muzny D.M."/>
            <person name="Nelson D.L."/>
            <person name="Nelson D.R."/>
            <person name="Nelson K.A."/>
            <person name="Nixon K."/>
            <person name="Nusskern D.R."/>
            <person name="Pacleb J.M."/>
            <person name="Palazzolo M."/>
            <person name="Pittman G.S."/>
            <person name="Pan S."/>
            <person name="Pollard J."/>
            <person name="Puri V."/>
            <person name="Reese M.G."/>
            <person name="Reinert K."/>
            <person name="Remington K."/>
            <person name="Saunders R.D.C."/>
            <person name="Scheeler F."/>
            <person name="Shen H."/>
            <person name="Shue B.C."/>
            <person name="Siden-Kiamos I."/>
            <person name="Simpson M."/>
            <person name="Skupski M.P."/>
            <person name="Smith T.J."/>
            <person name="Spier E."/>
            <person name="Spradling A.C."/>
            <person name="Stapleton M."/>
            <person name="Strong R."/>
            <person name="Sun E."/>
            <person name="Svirskas R."/>
            <person name="Tector C."/>
            <person name="Turner R."/>
            <person name="Venter E."/>
            <person name="Wang A.H."/>
            <person name="Wang X."/>
            <person name="Wang Z.-Y."/>
            <person name="Wassarman D.A."/>
            <person name="Weinstock G.M."/>
            <person name="Weissenbach J."/>
            <person name="Williams S.M."/>
            <person name="Woodage T."/>
            <person name="Worley K.C."/>
            <person name="Wu D."/>
            <person name="Yang S."/>
            <person name="Yao Q.A."/>
            <person name="Ye J."/>
            <person name="Yeh R.-F."/>
            <person name="Zaveri J.S."/>
            <person name="Zhan M."/>
            <person name="Zhang G."/>
            <person name="Zhao Q."/>
            <person name="Zheng L."/>
            <person name="Zheng X.H."/>
            <person name="Zhong F.N."/>
            <person name="Zhong W."/>
            <person name="Zhou X."/>
            <person name="Zhu S.C."/>
            <person name="Zhu X."/>
            <person name="Smith H.O."/>
            <person name="Gibbs R.A."/>
            <person name="Myers E.W."/>
            <person name="Rubin G.M."/>
            <person name="Venter J.C."/>
        </authorList>
    </citation>
    <scope>NUCLEOTIDE SEQUENCE [LARGE SCALE GENOMIC DNA]</scope>
    <source>
        <strain>Berkeley</strain>
    </source>
</reference>
<reference key="3">
    <citation type="journal article" date="2002" name="Genome Biol.">
        <title>Annotation of the Drosophila melanogaster euchromatic genome: a systematic review.</title>
        <authorList>
            <person name="Misra S."/>
            <person name="Crosby M.A."/>
            <person name="Mungall C.J."/>
            <person name="Matthews B.B."/>
            <person name="Campbell K.S."/>
            <person name="Hradecky P."/>
            <person name="Huang Y."/>
            <person name="Kaminker J.S."/>
            <person name="Millburn G.H."/>
            <person name="Prochnik S.E."/>
            <person name="Smith C.D."/>
            <person name="Tupy J.L."/>
            <person name="Whitfield E.J."/>
            <person name="Bayraktaroglu L."/>
            <person name="Berman B.P."/>
            <person name="Bettencourt B.R."/>
            <person name="Celniker S.E."/>
            <person name="de Grey A.D.N.J."/>
            <person name="Drysdale R.A."/>
            <person name="Harris N.L."/>
            <person name="Richter J."/>
            <person name="Russo S."/>
            <person name="Schroeder A.J."/>
            <person name="Shu S.Q."/>
            <person name="Stapleton M."/>
            <person name="Yamada C."/>
            <person name="Ashburner M."/>
            <person name="Gelbart W.M."/>
            <person name="Rubin G.M."/>
            <person name="Lewis S.E."/>
        </authorList>
    </citation>
    <scope>GENOME REANNOTATION</scope>
    <source>
        <strain>Berkeley</strain>
    </source>
</reference>
<reference evidence="2" key="4">
    <citation type="journal article" date="2000" name="Genetics">
        <title>Molecular population genetics of male accessory gland proteins in Drosophila.</title>
        <authorList>
            <person name="Begun D.J."/>
            <person name="Whitley P."/>
            <person name="Todd B.L."/>
            <person name="Waldrip-Dail H.M."/>
            <person name="Clark A.G."/>
        </authorList>
    </citation>
    <scope>NUCLEOTIDE SEQUENCE [GENOMIC DNA] OF 11-47</scope>
    <source>
        <strain>WS1</strain>
        <strain>WS16</strain>
        <strain>WS17</strain>
        <strain>WS19</strain>
        <strain>WS26</strain>
        <strain>WS47</strain>
        <strain>WS49</strain>
        <strain>WS9</strain>
        <strain>ZIM10C</strain>
        <strain>ZIM22C</strain>
        <strain>ZIM24C</strain>
        <strain>ZIM30C</strain>
        <strain>ZIM32C</strain>
        <strain>ZIM35C</strain>
        <strain>ZIM49C</strain>
        <strain>ZIM5C</strain>
        <strain>ZIM7C</strain>
    </source>
</reference>
<dbReference type="EMBL" id="U90950">
    <property type="protein sequence ID" value="AAB96397.1"/>
    <property type="molecule type" value="mRNA"/>
</dbReference>
<dbReference type="EMBL" id="AE014134">
    <property type="protein sequence ID" value="AAF53108.2"/>
    <property type="molecule type" value="Genomic_DNA"/>
</dbReference>
<dbReference type="EMBL" id="AY010560">
    <property type="protein sequence ID" value="AAG32771.1"/>
    <property type="molecule type" value="Genomic_DNA"/>
</dbReference>
<dbReference type="EMBL" id="AY010561">
    <property type="protein sequence ID" value="AAG32772.1"/>
    <property type="molecule type" value="Genomic_DNA"/>
</dbReference>
<dbReference type="EMBL" id="AY010562">
    <property type="protein sequence ID" value="AAG32773.1"/>
    <property type="molecule type" value="Genomic_DNA"/>
</dbReference>
<dbReference type="EMBL" id="AY010563">
    <property type="protein sequence ID" value="AAG32774.1"/>
    <property type="molecule type" value="Genomic_DNA"/>
</dbReference>
<dbReference type="EMBL" id="AY010564">
    <property type="protein sequence ID" value="AAG32775.1"/>
    <property type="molecule type" value="Genomic_DNA"/>
</dbReference>
<dbReference type="EMBL" id="AY010565">
    <property type="protein sequence ID" value="AAG32776.1"/>
    <property type="molecule type" value="Genomic_DNA"/>
</dbReference>
<dbReference type="EMBL" id="AY010566">
    <property type="protein sequence ID" value="AAG32777.1"/>
    <property type="molecule type" value="Genomic_DNA"/>
</dbReference>
<dbReference type="EMBL" id="AY010567">
    <property type="protein sequence ID" value="AAG32778.1"/>
    <property type="molecule type" value="Genomic_DNA"/>
</dbReference>
<dbReference type="EMBL" id="AY010568">
    <property type="protein sequence ID" value="AAG32779.1"/>
    <property type="molecule type" value="Genomic_DNA"/>
</dbReference>
<dbReference type="EMBL" id="AY010569">
    <property type="protein sequence ID" value="AAG32780.1"/>
    <property type="molecule type" value="Genomic_DNA"/>
</dbReference>
<dbReference type="EMBL" id="AY010570">
    <property type="protein sequence ID" value="AAG32781.1"/>
    <property type="molecule type" value="Genomic_DNA"/>
</dbReference>
<dbReference type="EMBL" id="AY010571">
    <property type="protein sequence ID" value="AAG32782.1"/>
    <property type="molecule type" value="Genomic_DNA"/>
</dbReference>
<dbReference type="EMBL" id="AY010572">
    <property type="protein sequence ID" value="AAG32783.1"/>
    <property type="molecule type" value="Genomic_DNA"/>
</dbReference>
<dbReference type="EMBL" id="AY010573">
    <property type="protein sequence ID" value="AAG32784.1"/>
    <property type="molecule type" value="Genomic_DNA"/>
</dbReference>
<dbReference type="EMBL" id="AY010574">
    <property type="protein sequence ID" value="AAG32785.1"/>
    <property type="molecule type" value="Genomic_DNA"/>
</dbReference>
<dbReference type="EMBL" id="AY010575">
    <property type="protein sequence ID" value="AAG32786.1"/>
    <property type="molecule type" value="Genomic_DNA"/>
</dbReference>
<dbReference type="EMBL" id="AY010576">
    <property type="protein sequence ID" value="AAG32787.1"/>
    <property type="molecule type" value="Genomic_DNA"/>
</dbReference>
<dbReference type="RefSeq" id="NP_523550.3">
    <property type="nucleotide sequence ID" value="NM_078826.4"/>
</dbReference>
<dbReference type="FunCoup" id="O46227">
    <property type="interactions" value="45"/>
</dbReference>
<dbReference type="STRING" id="7227.FBpp0079854"/>
<dbReference type="PaxDb" id="7227-FBpp0079854"/>
<dbReference type="EnsemblMetazoa" id="FBtr0080270">
    <property type="protein sequence ID" value="FBpp0079854"/>
    <property type="gene ID" value="FBgn0267327"/>
</dbReference>
<dbReference type="GeneID" id="3772154"/>
<dbReference type="KEGG" id="dme:Dmel_CG6555"/>
<dbReference type="UCSC" id="CG6555-RA">
    <property type="organism name" value="d. melanogaster"/>
</dbReference>
<dbReference type="AGR" id="FB:FBgn0267327"/>
<dbReference type="CTD" id="3772154"/>
<dbReference type="FlyBase" id="FBgn0267327">
    <property type="gene designation" value="Acp33A"/>
</dbReference>
<dbReference type="VEuPathDB" id="VectorBase:FBgn0267327"/>
<dbReference type="HOGENOM" id="CLU_3175924_0_0_1"/>
<dbReference type="InParanoid" id="O46227"/>
<dbReference type="OrthoDB" id="7805392at2759"/>
<dbReference type="PhylomeDB" id="O46227"/>
<dbReference type="BioGRID-ORCS" id="3772154">
    <property type="hits" value="0 hits in 1 CRISPR screen"/>
</dbReference>
<dbReference type="GenomeRNAi" id="3772154"/>
<dbReference type="PRO" id="PR:O46227"/>
<dbReference type="Proteomes" id="UP000000803">
    <property type="component" value="Chromosome 2L"/>
</dbReference>
<dbReference type="Bgee" id="FBgn0267327">
    <property type="expression patterns" value="Expressed in spermatid in male reproductive gland and 42 other cell types or tissues"/>
</dbReference>
<dbReference type="ExpressionAtlas" id="O46227">
    <property type="expression patterns" value="baseline and differential"/>
</dbReference>
<dbReference type="GO" id="GO:0005576">
    <property type="term" value="C:extracellular region"/>
    <property type="evidence" value="ECO:0000304"/>
    <property type="project" value="UniProtKB"/>
</dbReference>
<dbReference type="GO" id="GO:0005615">
    <property type="term" value="C:extracellular space"/>
    <property type="evidence" value="ECO:0007005"/>
    <property type="project" value="FlyBase"/>
</dbReference>
<dbReference type="GO" id="GO:0005179">
    <property type="term" value="F:hormone activity"/>
    <property type="evidence" value="ECO:0000303"/>
    <property type="project" value="UniProtKB"/>
</dbReference>
<dbReference type="GO" id="GO:0045434">
    <property type="term" value="P:negative regulation of female receptivity, post-mating"/>
    <property type="evidence" value="ECO:0000303"/>
    <property type="project" value="UniProtKB"/>
</dbReference>
<dbReference type="GO" id="GO:0019953">
    <property type="term" value="P:sexual reproduction"/>
    <property type="evidence" value="ECO:0007007"/>
    <property type="project" value="FlyBase"/>
</dbReference>